<protein>
    <recommendedName>
        <fullName evidence="6">Trans-cinnamate 4-monooxygenase C4H1</fullName>
        <ecNumber evidence="1">1.14.14.91</ecNumber>
    </recommendedName>
    <alternativeName>
        <fullName evidence="5">Cinnamate-4-hydroxylase 1</fullName>
        <shortName evidence="5">PhC4H1</shortName>
    </alternativeName>
    <alternativeName>
        <fullName evidence="6">Cytochrome P450 C4H1</fullName>
    </alternativeName>
</protein>
<accession>F1B282</accession>
<evidence type="ECO:0000250" key="1">
    <source>
        <dbReference type="UniProtKB" id="Q04468"/>
    </source>
</evidence>
<evidence type="ECO:0000250" key="2">
    <source>
        <dbReference type="UniProtKB" id="Q8RN03"/>
    </source>
</evidence>
<evidence type="ECO:0000255" key="3">
    <source>
        <dbReference type="PROSITE-ProRule" id="PRU00768"/>
    </source>
</evidence>
<evidence type="ECO:0000269" key="4">
    <source>
    </source>
</evidence>
<evidence type="ECO:0000303" key="5">
    <source>
    </source>
</evidence>
<evidence type="ECO:0000305" key="6"/>
<gene>
    <name evidence="5" type="primary">C4H1</name>
</gene>
<comment type="function">
    <text evidence="1">Component of the floral volatile benzenoid/phenylpropanoid (FVBP) biosynthetic pathway that controls carbon flux to pigments essential for pollination or UV protection, to numerous pytoalexins synthesized by plants when challenged by pathogens, and to lignins.</text>
</comment>
<comment type="catalytic activity">
    <reaction evidence="1">
        <text>(E)-cinnamate + reduced [NADPH--hemoprotein reductase] + O2 = (E)-4-coumarate + oxidized [NADPH--hemoprotein reductase] + H2O + H(+)</text>
        <dbReference type="Rhea" id="RHEA:10608"/>
        <dbReference type="Rhea" id="RHEA-COMP:11964"/>
        <dbReference type="Rhea" id="RHEA-COMP:11965"/>
        <dbReference type="ChEBI" id="CHEBI:12876"/>
        <dbReference type="ChEBI" id="CHEBI:15377"/>
        <dbReference type="ChEBI" id="CHEBI:15378"/>
        <dbReference type="ChEBI" id="CHEBI:15379"/>
        <dbReference type="ChEBI" id="CHEBI:15669"/>
        <dbReference type="ChEBI" id="CHEBI:57618"/>
        <dbReference type="ChEBI" id="CHEBI:58210"/>
        <dbReference type="EC" id="1.14.14.91"/>
    </reaction>
</comment>
<comment type="cofactor">
    <cofactor evidence="2">
        <name>heme</name>
        <dbReference type="ChEBI" id="CHEBI:30413"/>
    </cofactor>
</comment>
<comment type="pathway">
    <text evidence="1">Phenylpropanoid metabolism; trans-4-coumarate biosynthesis; trans-4-coumarate from trans-cinnamate: step 1/1.</text>
</comment>
<comment type="subcellular location">
    <subcellularLocation>
        <location evidence="3">Nucleus</location>
    </subcellularLocation>
</comment>
<comment type="developmental stage">
    <text evidence="4">In corollas, accumulates progressively during flower development, from buds to anthesis, with a peak at flower opening, but fades out in senescing flowers.</text>
</comment>
<comment type="induction">
    <text evidence="4">Repressed by MYB4.</text>
</comment>
<comment type="similarity">
    <text evidence="6">Belongs to the cytochrome P450 family.</text>
</comment>
<sequence length="506" mass="58485">MDLLLLEKTLIGLFFAIIIAIVVSKLRSKKFKLPPGPIPVPVFGNWLQVGDDLNHRNLTEYAKKFGDLFLLRMGQRNLVVVSSPELAKEVLHTQGVEFGSRTRNVVFDIFTGKGQDMVFTVYGEHWRKMRRIMTVPFFTNKVVQQYRGGWEDEVAHVIDDVKKMPESATNGIVLRKRLQLMMYNNMYRIMFDRRFESEDDPLFNKLKALNGERSRLAQSFEYNYGDFIPILRPFLRGYLKICKEVKQRRLQLFKDYFVDERKKLSTTTKSMDNNALKCAIDHILEAEQKGEINEDNVLYIVENINVAAIETTLWSIEWGIAELVNHPEIQKKLRDEIDSVLGPGVQITEPHTHKLPYLQAVIKETLRLRMAIPLLVPHMNLHDAKLAGYDIPAESKILVNAWWLANNPATWKRPEEFRPERFFEEEKHVEANGNDFRYLPFGVGRRSCPGIILALPILGITLGRLVQNFELLPPPGQSKLDTTEKGGQFSLHILKHFTIVMKPRSF</sequence>
<organism>
    <name type="scientific">Petunia hybrida</name>
    <name type="common">Petunia</name>
    <dbReference type="NCBI Taxonomy" id="4102"/>
    <lineage>
        <taxon>Eukaryota</taxon>
        <taxon>Viridiplantae</taxon>
        <taxon>Streptophyta</taxon>
        <taxon>Embryophyta</taxon>
        <taxon>Tracheophyta</taxon>
        <taxon>Spermatophyta</taxon>
        <taxon>Magnoliopsida</taxon>
        <taxon>eudicotyledons</taxon>
        <taxon>Gunneridae</taxon>
        <taxon>Pentapetalae</taxon>
        <taxon>asterids</taxon>
        <taxon>lamiids</taxon>
        <taxon>Solanales</taxon>
        <taxon>Solanaceae</taxon>
        <taxon>Petunioideae</taxon>
        <taxon>Petunia</taxon>
    </lineage>
</organism>
<dbReference type="EC" id="1.14.14.91" evidence="1"/>
<dbReference type="EMBL" id="HM447144">
    <property type="protein sequence ID" value="ADX33332.1"/>
    <property type="molecule type" value="mRNA"/>
</dbReference>
<dbReference type="SMR" id="F1B282"/>
<dbReference type="UniPathway" id="UPA00825">
    <property type="reaction ID" value="UER00789"/>
</dbReference>
<dbReference type="GO" id="GO:0005634">
    <property type="term" value="C:nucleus"/>
    <property type="evidence" value="ECO:0007669"/>
    <property type="project" value="UniProtKB-SubCell"/>
</dbReference>
<dbReference type="GO" id="GO:0020037">
    <property type="term" value="F:heme binding"/>
    <property type="evidence" value="ECO:0007669"/>
    <property type="project" value="InterPro"/>
</dbReference>
<dbReference type="GO" id="GO:0005506">
    <property type="term" value="F:iron ion binding"/>
    <property type="evidence" value="ECO:0007669"/>
    <property type="project" value="InterPro"/>
</dbReference>
<dbReference type="GO" id="GO:0016710">
    <property type="term" value="F:trans-cinnamate 4-monooxygenase activity"/>
    <property type="evidence" value="ECO:0007669"/>
    <property type="project" value="UniProtKB-EC"/>
</dbReference>
<dbReference type="GO" id="GO:0009808">
    <property type="term" value="P:lignin metabolic process"/>
    <property type="evidence" value="ECO:0007669"/>
    <property type="project" value="TreeGrafter"/>
</dbReference>
<dbReference type="CDD" id="cd11074">
    <property type="entry name" value="CYP73"/>
    <property type="match status" value="1"/>
</dbReference>
<dbReference type="FunFam" id="1.10.630.10:FF:000013">
    <property type="entry name" value="Trans-cinnamate 4-monooxygenase"/>
    <property type="match status" value="1"/>
</dbReference>
<dbReference type="Gene3D" id="1.10.630.10">
    <property type="entry name" value="Cytochrome P450"/>
    <property type="match status" value="1"/>
</dbReference>
<dbReference type="InterPro" id="IPR001128">
    <property type="entry name" value="Cyt_P450"/>
</dbReference>
<dbReference type="InterPro" id="IPR017972">
    <property type="entry name" value="Cyt_P450_CS"/>
</dbReference>
<dbReference type="InterPro" id="IPR002401">
    <property type="entry name" value="Cyt_P450_E_grp-I"/>
</dbReference>
<dbReference type="InterPro" id="IPR036396">
    <property type="entry name" value="Cyt_P450_sf"/>
</dbReference>
<dbReference type="PANTHER" id="PTHR47948">
    <property type="entry name" value="TRANS-CINNAMATE 4-MONOOXYGENASE"/>
    <property type="match status" value="1"/>
</dbReference>
<dbReference type="PANTHER" id="PTHR47948:SF4">
    <property type="entry name" value="TRANS-CINNAMATE 4-MONOOXYGENASE"/>
    <property type="match status" value="1"/>
</dbReference>
<dbReference type="Pfam" id="PF00067">
    <property type="entry name" value="p450"/>
    <property type="match status" value="1"/>
</dbReference>
<dbReference type="PRINTS" id="PR00463">
    <property type="entry name" value="EP450I"/>
</dbReference>
<dbReference type="PRINTS" id="PR00385">
    <property type="entry name" value="P450"/>
</dbReference>
<dbReference type="SUPFAM" id="SSF48264">
    <property type="entry name" value="Cytochrome P450"/>
    <property type="match status" value="1"/>
</dbReference>
<dbReference type="PROSITE" id="PS00086">
    <property type="entry name" value="CYTOCHROME_P450"/>
    <property type="match status" value="1"/>
</dbReference>
<proteinExistence type="evidence at transcript level"/>
<reference key="1">
    <citation type="journal article" date="2011" name="J. Exp. Bot.">
        <title>PhMYB4 fine-tunes the floral volatile signature of Petunia x hybrida through PhC4H.</title>
        <authorList>
            <person name="Colquhoun T.A."/>
            <person name="Kim J.Y."/>
            <person name="Wedde A.E."/>
            <person name="Levin L.A."/>
            <person name="Schmitt K.C."/>
            <person name="Schuurink R.C."/>
            <person name="Clark D.G."/>
        </authorList>
    </citation>
    <scope>NUCLEOTIDE SEQUENCE [MRNA]</scope>
    <scope>REPRESSION BY MYB4</scope>
    <scope>DEVELOPMENTAL STAGE</scope>
    <source>
        <strain>cv. Mitchell</strain>
    </source>
</reference>
<name>C4H1_PETHY</name>
<feature type="chain" id="PRO_0000451516" description="Trans-cinnamate 4-monooxygenase C4H1">
    <location>
        <begin position="1"/>
        <end position="506"/>
    </location>
</feature>
<feature type="short sequence motif" description="Nuclear localization signal 1" evidence="3">
    <location>
        <begin position="161"/>
        <end position="168"/>
    </location>
</feature>
<feature type="short sequence motif" description="Nuclear localization signal 2" evidence="3">
    <location>
        <begin position="247"/>
        <end position="254"/>
    </location>
</feature>
<feature type="binding site" description="axial binding residue" evidence="2">
    <location>
        <position position="448"/>
    </location>
    <ligand>
        <name>heme</name>
        <dbReference type="ChEBI" id="CHEBI:30413"/>
    </ligand>
    <ligandPart>
        <name>Fe</name>
        <dbReference type="ChEBI" id="CHEBI:18248"/>
    </ligandPart>
</feature>
<keyword id="KW-0349">Heme</keyword>
<keyword id="KW-0408">Iron</keyword>
<keyword id="KW-0479">Metal-binding</keyword>
<keyword id="KW-0503">Monooxygenase</keyword>
<keyword id="KW-0539">Nucleus</keyword>
<keyword id="KW-0560">Oxidoreductase</keyword>